<feature type="chain" id="PRO_0000089283" description="CAG pathogenicity island protein 13">
    <location>
        <begin position="1"/>
        <end position="196"/>
    </location>
</feature>
<feature type="sequence variant" description="In strain: NCTC 11638.">
    <original>S</original>
    <variation>G</variation>
    <location>
        <position position="2"/>
    </location>
</feature>
<feature type="sequence variant" description="In strain: NCTC 11638.">
    <original>D</original>
    <variation>N</variation>
    <location>
        <position position="14"/>
    </location>
</feature>
<feature type="sequence variant" description="In strain: NCTC 11638.">
    <original>S</original>
    <variation>N</variation>
    <location>
        <position position="33"/>
    </location>
</feature>
<feature type="sequence variant" description="In strain: NCTC 11638.">
    <original>K</original>
    <variation>E</variation>
    <location>
        <position position="192"/>
    </location>
</feature>
<feature type="sequence variant" description="In strain: NCTC 11638.">
    <original>V</original>
    <variation>VQNA</variation>
    <location>
        <position position="196"/>
    </location>
</feature>
<feature type="helix" evidence="1">
    <location>
        <begin position="25"/>
        <end position="27"/>
    </location>
</feature>
<feature type="helix" evidence="1">
    <location>
        <begin position="34"/>
        <end position="56"/>
    </location>
</feature>
<feature type="helix" evidence="1">
    <location>
        <begin position="58"/>
        <end position="68"/>
    </location>
</feature>
<feature type="helix" evidence="1">
    <location>
        <begin position="72"/>
        <end position="78"/>
    </location>
</feature>
<feature type="helix" evidence="1">
    <location>
        <begin position="81"/>
        <end position="104"/>
    </location>
</feature>
<feature type="helix" evidence="1">
    <location>
        <begin position="112"/>
        <end position="120"/>
    </location>
</feature>
<feature type="helix" evidence="1">
    <location>
        <begin position="122"/>
        <end position="124"/>
    </location>
</feature>
<feature type="helix" evidence="1">
    <location>
        <begin position="127"/>
        <end position="132"/>
    </location>
</feature>
<feature type="helix" evidence="1">
    <location>
        <begin position="135"/>
        <end position="148"/>
    </location>
</feature>
<feature type="turn" evidence="1">
    <location>
        <begin position="149"/>
        <end position="152"/>
    </location>
</feature>
<feature type="helix" evidence="1">
    <location>
        <begin position="159"/>
        <end position="167"/>
    </location>
</feature>
<feature type="helix" evidence="1">
    <location>
        <begin position="171"/>
        <end position="179"/>
    </location>
</feature>
<organism>
    <name type="scientific">Helicobacter pylori (strain ATCC 700392 / 26695)</name>
    <name type="common">Campylobacter pylori</name>
    <dbReference type="NCBI Taxonomy" id="85962"/>
    <lineage>
        <taxon>Bacteria</taxon>
        <taxon>Pseudomonadati</taxon>
        <taxon>Campylobacterota</taxon>
        <taxon>Epsilonproteobacteria</taxon>
        <taxon>Campylobacterales</taxon>
        <taxon>Helicobacteraceae</taxon>
        <taxon>Helicobacter</taxon>
    </lineage>
</organism>
<sequence length="196" mass="23379">MSNNMRKLFSMIADSKDKKEKLIESLQENELLSTDEKKKIIDQIKTMHDFFKQMHTNKGALDKVLRNYMKDYRAVIKSIGVDKFKKVYRLLESETMELLHAIAENPNFLFSKFDRSILGIFLPFFSKPIMFKMSIREMDSQIELYGTKLPLLKLFVMTDEEMNFYANLKTIEQYNDYVRDLLMKFDLEKYMKEKGV</sequence>
<reference key="1">
    <citation type="journal article" date="1996" name="Proc. Natl. Acad. Sci. U.S.A.">
        <title>cag, a pathogenicity island of Helicobacter pylori, encodes type I-specific and disease-associated virulence factors.</title>
        <authorList>
            <person name="Censini S."/>
            <person name="Lange C."/>
            <person name="Xiang Z."/>
            <person name="Crabtree J."/>
            <person name="Ghiara P."/>
            <person name="Borodovsky M."/>
            <person name="Rappuoli R."/>
            <person name="Covacci A."/>
        </authorList>
    </citation>
    <scope>NUCLEOTIDE SEQUENCE [GENOMIC DNA]</scope>
    <source>
        <strain>DSM 4867 / CCUG 17874 / NCTC 11638</strain>
    </source>
</reference>
<reference key="2">
    <citation type="journal article" date="1998" name="Mol. Microbiol.">
        <title>Analyses of the cag pathogenicity island of Helicobacter pylori.</title>
        <authorList>
            <person name="Akopyants N.S."/>
            <person name="Clifton S.W."/>
            <person name="Kersulyte D."/>
            <person name="Crabtree J.E."/>
            <person name="Youree B.E."/>
            <person name="Reece C.A."/>
            <person name="Bukanov N.O."/>
            <person name="Drazek E.S."/>
            <person name="Roe B.A."/>
            <person name="Berg D.E."/>
        </authorList>
    </citation>
    <scope>NUCLEOTIDE SEQUENCE [GENOMIC DNA]</scope>
</reference>
<reference key="3">
    <citation type="journal article" date="1997" name="Nature">
        <title>The complete genome sequence of the gastric pathogen Helicobacter pylori.</title>
        <authorList>
            <person name="Tomb J.-F."/>
            <person name="White O."/>
            <person name="Kerlavage A.R."/>
            <person name="Clayton R.A."/>
            <person name="Sutton G.G."/>
            <person name="Fleischmann R.D."/>
            <person name="Ketchum K.A."/>
            <person name="Klenk H.-P."/>
            <person name="Gill S.R."/>
            <person name="Dougherty B.A."/>
            <person name="Nelson K.E."/>
            <person name="Quackenbush J."/>
            <person name="Zhou L."/>
            <person name="Kirkness E.F."/>
            <person name="Peterson S.N."/>
            <person name="Loftus B.J."/>
            <person name="Richardson D.L."/>
            <person name="Dodson R.J."/>
            <person name="Khalak H.G."/>
            <person name="Glodek A."/>
            <person name="McKenney K."/>
            <person name="FitzGerald L.M."/>
            <person name="Lee N."/>
            <person name="Adams M.D."/>
            <person name="Hickey E.K."/>
            <person name="Berg D.E."/>
            <person name="Gocayne J.D."/>
            <person name="Utterback T.R."/>
            <person name="Peterson J.D."/>
            <person name="Kelley J.M."/>
            <person name="Cotton M.D."/>
            <person name="Weidman J.F."/>
            <person name="Fujii C."/>
            <person name="Bowman C."/>
            <person name="Watthey L."/>
            <person name="Wallin E."/>
            <person name="Hayes W.S."/>
            <person name="Borodovsky M."/>
            <person name="Karp P.D."/>
            <person name="Smith H.O."/>
            <person name="Fraser C.M."/>
            <person name="Venter J.C."/>
        </authorList>
    </citation>
    <scope>NUCLEOTIDE SEQUENCE [LARGE SCALE GENOMIC DNA]</scope>
    <source>
        <strain>ATCC 700392 / 26695</strain>
    </source>
</reference>
<evidence type="ECO:0007829" key="1">
    <source>
        <dbReference type="PDB" id="2G3V"/>
    </source>
</evidence>
<keyword id="KW-0002">3D-structure</keyword>
<keyword id="KW-1185">Reference proteome</keyword>
<gene>
    <name type="primary">cagS</name>
    <name type="synonym">cag13</name>
    <name type="ordered locus">HP_0534</name>
</gene>
<proteinExistence type="evidence at protein level"/>
<name>CAGS_HELPY</name>
<protein>
    <recommendedName>
        <fullName>CAG pathogenicity island protein 13</fullName>
    </recommendedName>
</protein>
<accession>P97227</accession>
<dbReference type="EMBL" id="AF282852">
    <property type="protein sequence ID" value="AAF80204.1"/>
    <property type="molecule type" value="Genomic_DNA"/>
</dbReference>
<dbReference type="EMBL" id="AC000108">
    <property type="status" value="NOT_ANNOTATED_CDS"/>
    <property type="molecule type" value="Genomic_DNA"/>
</dbReference>
<dbReference type="EMBL" id="AE000511">
    <property type="protein sequence ID" value="AAD07600.1"/>
    <property type="molecule type" value="Genomic_DNA"/>
</dbReference>
<dbReference type="PIR" id="F64586">
    <property type="entry name" value="F64586"/>
</dbReference>
<dbReference type="RefSeq" id="NP_207330.1">
    <property type="nucleotide sequence ID" value="NC_000915.1"/>
</dbReference>
<dbReference type="RefSeq" id="WP_000069596.1">
    <property type="nucleotide sequence ID" value="NC_018939.1"/>
</dbReference>
<dbReference type="PDB" id="2G3V">
    <property type="method" value="X-ray"/>
    <property type="resolution" value="2.30 A"/>
    <property type="chains" value="A/B/C/D=1-196"/>
</dbReference>
<dbReference type="PDBsum" id="2G3V"/>
<dbReference type="SMR" id="P97227"/>
<dbReference type="STRING" id="85962.HP_0534"/>
<dbReference type="TCDB" id="3.A.7.12.1">
    <property type="family name" value="the type iv (conjugal dna-protein transfer or virb) secretory pathway (ivsp) family"/>
</dbReference>
<dbReference type="PaxDb" id="85962-C694_02755"/>
<dbReference type="EnsemblBacteria" id="AAD07600">
    <property type="protein sequence ID" value="AAD07600"/>
    <property type="gene ID" value="HP_0534"/>
</dbReference>
<dbReference type="KEGG" id="heo:C694_02755"/>
<dbReference type="KEGG" id="hpy:HP_0534"/>
<dbReference type="PATRIC" id="fig|85962.47.peg.576"/>
<dbReference type="InParanoid" id="P97227"/>
<dbReference type="EvolutionaryTrace" id="P97227"/>
<dbReference type="Proteomes" id="UP000000429">
    <property type="component" value="Chromosome"/>
</dbReference>
<dbReference type="Gene3D" id="1.20.120.1140">
    <property type="entry name" value="CAG pathogenicity island protein 13, CagS"/>
    <property type="match status" value="1"/>
</dbReference>
<dbReference type="InterPro" id="IPR032020">
    <property type="entry name" value="CagS"/>
</dbReference>
<dbReference type="InterPro" id="IPR038306">
    <property type="entry name" value="CagS_sf"/>
</dbReference>
<dbReference type="Pfam" id="PF16707">
    <property type="entry name" value="CagS"/>
    <property type="match status" value="1"/>
</dbReference>